<name>PDXA2_SYMTH</name>
<organism>
    <name type="scientific">Symbiobacterium thermophilum (strain DSM 24528 / JCM 14929 / IAM 14863 / T)</name>
    <dbReference type="NCBI Taxonomy" id="292459"/>
    <lineage>
        <taxon>Bacteria</taxon>
        <taxon>Bacillati</taxon>
        <taxon>Bacillota</taxon>
        <taxon>Clostridia</taxon>
        <taxon>Eubacteriales</taxon>
        <taxon>Symbiobacteriaceae</taxon>
        <taxon>Symbiobacterium</taxon>
    </lineage>
</organism>
<proteinExistence type="inferred from homology"/>
<reference key="1">
    <citation type="journal article" date="2004" name="Nucleic Acids Res.">
        <title>Genome sequence of Symbiobacterium thermophilum, an uncultivable bacterium that depends on microbial commensalism.</title>
        <authorList>
            <person name="Ueda K."/>
            <person name="Yamashita A."/>
            <person name="Ishikawa J."/>
            <person name="Shimada M."/>
            <person name="Watsuji T."/>
            <person name="Morimura K."/>
            <person name="Ikeda H."/>
            <person name="Hattori M."/>
            <person name="Beppu T."/>
        </authorList>
    </citation>
    <scope>NUCLEOTIDE SEQUENCE [LARGE SCALE GENOMIC DNA]</scope>
    <source>
        <strain>DSM 24528 / JCM 14929 / IAM 14863 / T</strain>
    </source>
</reference>
<accession>Q3V818</accession>
<dbReference type="EC" id="1.1.1.408" evidence="2"/>
<dbReference type="EMBL" id="AP006840">
    <property type="protein sequence ID" value="BAD41285.1"/>
    <property type="molecule type" value="Genomic_DNA"/>
</dbReference>
<dbReference type="RefSeq" id="WP_011196423.1">
    <property type="nucleotide sequence ID" value="NC_006177.1"/>
</dbReference>
<dbReference type="SMR" id="Q3V818"/>
<dbReference type="STRING" id="292459.STH2300"/>
<dbReference type="KEGG" id="sth:STH2300"/>
<dbReference type="eggNOG" id="COG1995">
    <property type="taxonomic scope" value="Bacteria"/>
</dbReference>
<dbReference type="HOGENOM" id="CLU_040168_0_1_9"/>
<dbReference type="OrthoDB" id="9801783at2"/>
<dbReference type="Proteomes" id="UP000000417">
    <property type="component" value="Chromosome"/>
</dbReference>
<dbReference type="GO" id="GO:0046872">
    <property type="term" value="F:metal ion binding"/>
    <property type="evidence" value="ECO:0007669"/>
    <property type="project" value="UniProtKB-KW"/>
</dbReference>
<dbReference type="GO" id="GO:0051287">
    <property type="term" value="F:NAD binding"/>
    <property type="evidence" value="ECO:0007669"/>
    <property type="project" value="InterPro"/>
</dbReference>
<dbReference type="GO" id="GO:0016491">
    <property type="term" value="F:oxidoreductase activity"/>
    <property type="evidence" value="ECO:0007669"/>
    <property type="project" value="UniProtKB-KW"/>
</dbReference>
<dbReference type="Gene3D" id="3.40.718.10">
    <property type="entry name" value="Isopropylmalate Dehydrogenase"/>
    <property type="match status" value="1"/>
</dbReference>
<dbReference type="InterPro" id="IPR005255">
    <property type="entry name" value="PdxA_fam"/>
</dbReference>
<dbReference type="NCBIfam" id="TIGR00557">
    <property type="entry name" value="pdxA"/>
    <property type="match status" value="1"/>
</dbReference>
<dbReference type="NCBIfam" id="NF002992">
    <property type="entry name" value="PRK03743.1"/>
    <property type="match status" value="1"/>
</dbReference>
<dbReference type="PANTHER" id="PTHR30004">
    <property type="entry name" value="4-HYDROXYTHREONINE-4-PHOSPHATE DEHYDROGENASE"/>
    <property type="match status" value="1"/>
</dbReference>
<dbReference type="PANTHER" id="PTHR30004:SF6">
    <property type="entry name" value="D-THREONATE 4-PHOSPHATE DEHYDROGENASE"/>
    <property type="match status" value="1"/>
</dbReference>
<dbReference type="Pfam" id="PF04166">
    <property type="entry name" value="PdxA"/>
    <property type="match status" value="1"/>
</dbReference>
<dbReference type="SUPFAM" id="SSF53659">
    <property type="entry name" value="Isocitrate/Isopropylmalate dehydrogenase-like"/>
    <property type="match status" value="1"/>
</dbReference>
<comment type="function">
    <text evidence="2">Catalyzes the NAD-dependent oxidation and subsequent decarboxylation of D-threonate 4-phosphate to produce dihydroxyacetone phosphate (DHAP).</text>
</comment>
<comment type="catalytic activity">
    <reaction evidence="2">
        <text>4-O-phospho-D-threonate + NAD(+) = dihydroxyacetone phosphate + CO2 + NADH</text>
        <dbReference type="Rhea" id="RHEA:52396"/>
        <dbReference type="ChEBI" id="CHEBI:16526"/>
        <dbReference type="ChEBI" id="CHEBI:57540"/>
        <dbReference type="ChEBI" id="CHEBI:57642"/>
        <dbReference type="ChEBI" id="CHEBI:57945"/>
        <dbReference type="ChEBI" id="CHEBI:136590"/>
        <dbReference type="EC" id="1.1.1.408"/>
    </reaction>
</comment>
<comment type="cofactor">
    <cofactor evidence="1">
        <name>a divalent metal cation</name>
        <dbReference type="ChEBI" id="CHEBI:60240"/>
    </cofactor>
    <text evidence="1">Binds 1 divalent metal cation per subunit.</text>
</comment>
<comment type="subunit">
    <text evidence="2">Homodimer.</text>
</comment>
<comment type="similarity">
    <text evidence="3">Belongs to the PdxA family. PdxA2 subfamily.</text>
</comment>
<gene>
    <name type="ordered locus">STH2300</name>
</gene>
<protein>
    <recommendedName>
        <fullName evidence="2">Putative D-threonate 4-phosphate dehydrogenase</fullName>
        <ecNumber evidence="2">1.1.1.408</ecNumber>
    </recommendedName>
</protein>
<keyword id="KW-0119">Carbohydrate metabolism</keyword>
<keyword id="KW-0479">Metal-binding</keyword>
<keyword id="KW-0520">NAD</keyword>
<keyword id="KW-0560">Oxidoreductase</keyword>
<keyword id="KW-1185">Reference proteome</keyword>
<feature type="chain" id="PRO_1000211916" description="Putative D-threonate 4-phosphate dehydrogenase">
    <location>
        <begin position="1"/>
        <end position="335"/>
    </location>
</feature>
<feature type="binding site" evidence="1">
    <location>
        <position position="140"/>
    </location>
    <ligand>
        <name>substrate</name>
    </ligand>
</feature>
<feature type="binding site" evidence="1">
    <location>
        <position position="141"/>
    </location>
    <ligand>
        <name>substrate</name>
    </ligand>
</feature>
<feature type="binding site" evidence="1">
    <location>
        <position position="170"/>
    </location>
    <ligand>
        <name>a divalent metal cation</name>
        <dbReference type="ChEBI" id="CHEBI:60240"/>
        <note>ligand shared between dimeric partners</note>
    </ligand>
</feature>
<feature type="binding site" evidence="1">
    <location>
        <position position="214"/>
    </location>
    <ligand>
        <name>a divalent metal cation</name>
        <dbReference type="ChEBI" id="CHEBI:60240"/>
        <note>ligand shared between dimeric partners</note>
    </ligand>
</feature>
<feature type="binding site" evidence="1">
    <location>
        <position position="269"/>
    </location>
    <ligand>
        <name>a divalent metal cation</name>
        <dbReference type="ChEBI" id="CHEBI:60240"/>
        <note>ligand shared between dimeric partners</note>
    </ligand>
</feature>
<feature type="binding site" evidence="1">
    <location>
        <position position="277"/>
    </location>
    <ligand>
        <name>substrate</name>
    </ligand>
</feature>
<feature type="binding site" evidence="1">
    <location>
        <position position="295"/>
    </location>
    <ligand>
        <name>substrate</name>
    </ligand>
</feature>
<evidence type="ECO:0000250" key="1">
    <source>
        <dbReference type="UniProtKB" id="P19624"/>
    </source>
</evidence>
<evidence type="ECO:0000250" key="2">
    <source>
        <dbReference type="UniProtKB" id="P58718"/>
    </source>
</evidence>
<evidence type="ECO:0000305" key="3"/>
<sequence>MDTRPLIGITMGDPASIGPEIAAKALANPEIYALCRPLLIGDSRVMARAFETTGVKLNLNPVATPAEGKYAHGTVDLIDLPVVDMGTLQWGQVQAQAGAAAFAYIKRSIELALEGAVDAVTTGPINKEALKAARIDFIGHTEIFGELTGSHDPLTMFETKGLRIFFLTRHVSLAQACRMITRDRVLDYIRRCTAALEQLGLVRPKLAVAGLNPHCGEHGLFGDEEVREIEPAVQQAQAEGYNVSGPHPADSVFWHAAQGRFDAVLSLYHDQGHIAAKMYDFERTVSITAGLPFLRSSVDHGTAFDIAGTGRASAVSLEEAIRVGAKYAAAFRRTR</sequence>